<feature type="chain" id="PRO_1000117143" description="UDP-N-acetylenolpyruvoylglucosamine reductase">
    <location>
        <begin position="1"/>
        <end position="303"/>
    </location>
</feature>
<feature type="domain" description="FAD-binding PCMH-type" evidence="1">
    <location>
        <begin position="23"/>
        <end position="188"/>
    </location>
</feature>
<feature type="active site" evidence="1">
    <location>
        <position position="167"/>
    </location>
</feature>
<feature type="active site" description="Proton donor" evidence="1">
    <location>
        <position position="217"/>
    </location>
</feature>
<feature type="active site" evidence="1">
    <location>
        <position position="287"/>
    </location>
</feature>
<sequence length="303" mass="33507">MIEELAGIDIRINEPLKKYTYTKVGGPADYLVFPRNRLELTRVVKYANNHSIPWIVLGNASNLIVRDGGIRGFVIMFNKLNTVTVDGYTIEAEAGANLIETTKVAKFHSLTGFEFACGIPGSVGGAIFMNAGAYGGEIANIFLSAKVLTPEGDIKTMTAREMAFGYRHSAIQKSGDIVISAKFALKPGDFEQISQEMNRLNYLRQLKQPLEYPSCGSVFKRPEGHFAGQLIMEAKLKGYRIGGVEVSEKHAGFMINVDHGTAKDYEHLIAHVIETVEHNSGIRLEREVRIIGEQESLNQKEKS</sequence>
<evidence type="ECO:0000255" key="1">
    <source>
        <dbReference type="HAMAP-Rule" id="MF_00037"/>
    </source>
</evidence>
<accession>B9DRZ6</accession>
<organism>
    <name type="scientific">Streptococcus uberis (strain ATCC BAA-854 / 0140J)</name>
    <dbReference type="NCBI Taxonomy" id="218495"/>
    <lineage>
        <taxon>Bacteria</taxon>
        <taxon>Bacillati</taxon>
        <taxon>Bacillota</taxon>
        <taxon>Bacilli</taxon>
        <taxon>Lactobacillales</taxon>
        <taxon>Streptococcaceae</taxon>
        <taxon>Streptococcus</taxon>
    </lineage>
</organism>
<protein>
    <recommendedName>
        <fullName evidence="1">UDP-N-acetylenolpyruvoylglucosamine reductase</fullName>
        <ecNumber evidence="1">1.3.1.98</ecNumber>
    </recommendedName>
    <alternativeName>
        <fullName evidence="1">UDP-N-acetylmuramate dehydrogenase</fullName>
    </alternativeName>
</protein>
<reference key="1">
    <citation type="journal article" date="2009" name="BMC Genomics">
        <title>Evidence for niche adaptation in the genome of the bovine pathogen Streptococcus uberis.</title>
        <authorList>
            <person name="Ward P.N."/>
            <person name="Holden M.T.G."/>
            <person name="Leigh J.A."/>
            <person name="Lennard N."/>
            <person name="Bignell A."/>
            <person name="Barron A."/>
            <person name="Clark L."/>
            <person name="Quail M.A."/>
            <person name="Woodward J."/>
            <person name="Barrell B.G."/>
            <person name="Egan S.A."/>
            <person name="Field T.R."/>
            <person name="Maskell D."/>
            <person name="Kehoe M."/>
            <person name="Dowson C.G."/>
            <person name="Chanter N."/>
            <person name="Whatmore A.M."/>
            <person name="Bentley S.D."/>
            <person name="Parkhill J."/>
        </authorList>
    </citation>
    <scope>NUCLEOTIDE SEQUENCE [LARGE SCALE GENOMIC DNA]</scope>
    <source>
        <strain>ATCC BAA-854 / 0140J</strain>
    </source>
</reference>
<proteinExistence type="inferred from homology"/>
<dbReference type="EC" id="1.3.1.98" evidence="1"/>
<dbReference type="EMBL" id="AM946015">
    <property type="protein sequence ID" value="CAR41840.1"/>
    <property type="molecule type" value="Genomic_DNA"/>
</dbReference>
<dbReference type="RefSeq" id="WP_012658325.1">
    <property type="nucleotide sequence ID" value="NC_012004.1"/>
</dbReference>
<dbReference type="SMR" id="B9DRZ6"/>
<dbReference type="STRING" id="218495.SUB0817"/>
<dbReference type="KEGG" id="sub:SUB0817"/>
<dbReference type="eggNOG" id="COG0812">
    <property type="taxonomic scope" value="Bacteria"/>
</dbReference>
<dbReference type="HOGENOM" id="CLU_035304_1_1_9"/>
<dbReference type="OrthoDB" id="9804753at2"/>
<dbReference type="UniPathway" id="UPA00219"/>
<dbReference type="Proteomes" id="UP000000449">
    <property type="component" value="Chromosome"/>
</dbReference>
<dbReference type="GO" id="GO:0005829">
    <property type="term" value="C:cytosol"/>
    <property type="evidence" value="ECO:0007669"/>
    <property type="project" value="TreeGrafter"/>
</dbReference>
<dbReference type="GO" id="GO:0071949">
    <property type="term" value="F:FAD binding"/>
    <property type="evidence" value="ECO:0007669"/>
    <property type="project" value="InterPro"/>
</dbReference>
<dbReference type="GO" id="GO:0008762">
    <property type="term" value="F:UDP-N-acetylmuramate dehydrogenase activity"/>
    <property type="evidence" value="ECO:0007669"/>
    <property type="project" value="UniProtKB-UniRule"/>
</dbReference>
<dbReference type="GO" id="GO:0051301">
    <property type="term" value="P:cell division"/>
    <property type="evidence" value="ECO:0007669"/>
    <property type="project" value="UniProtKB-KW"/>
</dbReference>
<dbReference type="GO" id="GO:0071555">
    <property type="term" value="P:cell wall organization"/>
    <property type="evidence" value="ECO:0007669"/>
    <property type="project" value="UniProtKB-KW"/>
</dbReference>
<dbReference type="GO" id="GO:0009252">
    <property type="term" value="P:peptidoglycan biosynthetic process"/>
    <property type="evidence" value="ECO:0007669"/>
    <property type="project" value="UniProtKB-UniRule"/>
</dbReference>
<dbReference type="GO" id="GO:0008360">
    <property type="term" value="P:regulation of cell shape"/>
    <property type="evidence" value="ECO:0007669"/>
    <property type="project" value="UniProtKB-KW"/>
</dbReference>
<dbReference type="Gene3D" id="3.30.465.10">
    <property type="match status" value="1"/>
</dbReference>
<dbReference type="Gene3D" id="3.90.78.10">
    <property type="entry name" value="UDP-N-acetylenolpyruvoylglucosamine reductase, C-terminal domain"/>
    <property type="match status" value="1"/>
</dbReference>
<dbReference type="Gene3D" id="3.30.43.10">
    <property type="entry name" value="Uridine Diphospho-n-acetylenolpyruvylglucosamine Reductase, domain 2"/>
    <property type="match status" value="1"/>
</dbReference>
<dbReference type="HAMAP" id="MF_00037">
    <property type="entry name" value="MurB"/>
    <property type="match status" value="1"/>
</dbReference>
<dbReference type="InterPro" id="IPR016166">
    <property type="entry name" value="FAD-bd_PCMH"/>
</dbReference>
<dbReference type="InterPro" id="IPR036318">
    <property type="entry name" value="FAD-bd_PCMH-like_sf"/>
</dbReference>
<dbReference type="InterPro" id="IPR016167">
    <property type="entry name" value="FAD-bd_PCMH_sub1"/>
</dbReference>
<dbReference type="InterPro" id="IPR016169">
    <property type="entry name" value="FAD-bd_PCMH_sub2"/>
</dbReference>
<dbReference type="InterPro" id="IPR003170">
    <property type="entry name" value="MurB"/>
</dbReference>
<dbReference type="InterPro" id="IPR011601">
    <property type="entry name" value="MurB_C"/>
</dbReference>
<dbReference type="InterPro" id="IPR036635">
    <property type="entry name" value="MurB_C_sf"/>
</dbReference>
<dbReference type="InterPro" id="IPR006094">
    <property type="entry name" value="Oxid_FAD_bind_N"/>
</dbReference>
<dbReference type="NCBIfam" id="TIGR00179">
    <property type="entry name" value="murB"/>
    <property type="match status" value="1"/>
</dbReference>
<dbReference type="NCBIfam" id="NF010480">
    <property type="entry name" value="PRK13905.1"/>
    <property type="match status" value="1"/>
</dbReference>
<dbReference type="PANTHER" id="PTHR21071">
    <property type="entry name" value="UDP-N-ACETYLENOLPYRUVOYLGLUCOSAMINE REDUCTASE"/>
    <property type="match status" value="1"/>
</dbReference>
<dbReference type="PANTHER" id="PTHR21071:SF4">
    <property type="entry name" value="UDP-N-ACETYLENOLPYRUVOYLGLUCOSAMINE REDUCTASE"/>
    <property type="match status" value="1"/>
</dbReference>
<dbReference type="Pfam" id="PF01565">
    <property type="entry name" value="FAD_binding_4"/>
    <property type="match status" value="1"/>
</dbReference>
<dbReference type="Pfam" id="PF02873">
    <property type="entry name" value="MurB_C"/>
    <property type="match status" value="1"/>
</dbReference>
<dbReference type="SUPFAM" id="SSF56176">
    <property type="entry name" value="FAD-binding/transporter-associated domain-like"/>
    <property type="match status" value="1"/>
</dbReference>
<dbReference type="SUPFAM" id="SSF56194">
    <property type="entry name" value="Uridine diphospho-N-Acetylenolpyruvylglucosamine reductase, MurB, C-terminal domain"/>
    <property type="match status" value="1"/>
</dbReference>
<dbReference type="PROSITE" id="PS51387">
    <property type="entry name" value="FAD_PCMH"/>
    <property type="match status" value="1"/>
</dbReference>
<name>MURB_STRU0</name>
<comment type="function">
    <text evidence="1">Cell wall formation.</text>
</comment>
<comment type="catalytic activity">
    <reaction evidence="1">
        <text>UDP-N-acetyl-alpha-D-muramate + NADP(+) = UDP-N-acetyl-3-O-(1-carboxyvinyl)-alpha-D-glucosamine + NADPH + H(+)</text>
        <dbReference type="Rhea" id="RHEA:12248"/>
        <dbReference type="ChEBI" id="CHEBI:15378"/>
        <dbReference type="ChEBI" id="CHEBI:57783"/>
        <dbReference type="ChEBI" id="CHEBI:58349"/>
        <dbReference type="ChEBI" id="CHEBI:68483"/>
        <dbReference type="ChEBI" id="CHEBI:70757"/>
        <dbReference type="EC" id="1.3.1.98"/>
    </reaction>
</comment>
<comment type="cofactor">
    <cofactor evidence="1">
        <name>FAD</name>
        <dbReference type="ChEBI" id="CHEBI:57692"/>
    </cofactor>
</comment>
<comment type="pathway">
    <text evidence="1">Cell wall biogenesis; peptidoglycan biosynthesis.</text>
</comment>
<comment type="subcellular location">
    <subcellularLocation>
        <location evidence="1">Cytoplasm</location>
    </subcellularLocation>
</comment>
<comment type="similarity">
    <text evidence="1">Belongs to the MurB family.</text>
</comment>
<gene>
    <name evidence="1" type="primary">murB</name>
    <name type="ordered locus">SUB0817</name>
</gene>
<keyword id="KW-0131">Cell cycle</keyword>
<keyword id="KW-0132">Cell division</keyword>
<keyword id="KW-0133">Cell shape</keyword>
<keyword id="KW-0961">Cell wall biogenesis/degradation</keyword>
<keyword id="KW-0963">Cytoplasm</keyword>
<keyword id="KW-0274">FAD</keyword>
<keyword id="KW-0285">Flavoprotein</keyword>
<keyword id="KW-0521">NADP</keyword>
<keyword id="KW-0560">Oxidoreductase</keyword>
<keyword id="KW-0573">Peptidoglycan synthesis</keyword>
<keyword id="KW-1185">Reference proteome</keyword>